<evidence type="ECO:0000255" key="1">
    <source>
        <dbReference type="PROSITE-ProRule" id="PRU00253"/>
    </source>
</evidence>
<evidence type="ECO:0000305" key="2"/>
<dbReference type="EMBL" id="M17356">
    <property type="protein sequence ID" value="AAB88753.1"/>
    <property type="molecule type" value="Genomic_DNA"/>
</dbReference>
<dbReference type="EMBL" id="AF233324">
    <property type="protein sequence ID" value="AAF33428.1"/>
    <property type="molecule type" value="Genomic_DNA"/>
</dbReference>
<dbReference type="EMBL" id="AE006468">
    <property type="protein sequence ID" value="AAL22808.1"/>
    <property type="molecule type" value="Genomic_DNA"/>
</dbReference>
<dbReference type="RefSeq" id="NP_462849.1">
    <property type="nucleotide sequence ID" value="NC_003197.2"/>
</dbReference>
<dbReference type="RefSeq" id="WP_000569786.1">
    <property type="nucleotide sequence ID" value="NC_003197.2"/>
</dbReference>
<dbReference type="SMR" id="P0A2Q4"/>
<dbReference type="STRING" id="99287.STM3964"/>
<dbReference type="PaxDb" id="99287-STM3964"/>
<dbReference type="GeneID" id="1255490"/>
<dbReference type="KEGG" id="stm:STM3964"/>
<dbReference type="PATRIC" id="fig|99287.12.peg.4182"/>
<dbReference type="HOGENOM" id="CLU_039613_6_0_6"/>
<dbReference type="OMA" id="PGNPCHD"/>
<dbReference type="PhylomeDB" id="P0A2Q4"/>
<dbReference type="BioCyc" id="SENT99287:STM3964-MONOMER"/>
<dbReference type="Proteomes" id="UP000001014">
    <property type="component" value="Chromosome"/>
</dbReference>
<dbReference type="GO" id="GO:0005737">
    <property type="term" value="C:cytoplasm"/>
    <property type="evidence" value="ECO:0007669"/>
    <property type="project" value="UniProtKB-SubCell"/>
</dbReference>
<dbReference type="GO" id="GO:0003700">
    <property type="term" value="F:DNA-binding transcription factor activity"/>
    <property type="evidence" value="ECO:0007669"/>
    <property type="project" value="InterPro"/>
</dbReference>
<dbReference type="GO" id="GO:0000976">
    <property type="term" value="F:transcription cis-regulatory region binding"/>
    <property type="evidence" value="ECO:0000318"/>
    <property type="project" value="GO_Central"/>
</dbReference>
<dbReference type="GO" id="GO:0009086">
    <property type="term" value="P:methionine biosynthetic process"/>
    <property type="evidence" value="ECO:0007669"/>
    <property type="project" value="UniProtKB-KW"/>
</dbReference>
<dbReference type="GO" id="GO:0006355">
    <property type="term" value="P:regulation of DNA-templated transcription"/>
    <property type="evidence" value="ECO:0000318"/>
    <property type="project" value="GO_Central"/>
</dbReference>
<dbReference type="CDD" id="cd08441">
    <property type="entry name" value="PBP2_MetR"/>
    <property type="match status" value="1"/>
</dbReference>
<dbReference type="FunFam" id="1.10.10.10:FF:000247">
    <property type="entry name" value="HTH-type transcriptional regulator MetR"/>
    <property type="match status" value="1"/>
</dbReference>
<dbReference type="Gene3D" id="3.40.190.10">
    <property type="entry name" value="Periplasmic binding protein-like II"/>
    <property type="match status" value="2"/>
</dbReference>
<dbReference type="Gene3D" id="1.10.10.10">
    <property type="entry name" value="Winged helix-like DNA-binding domain superfamily/Winged helix DNA-binding domain"/>
    <property type="match status" value="1"/>
</dbReference>
<dbReference type="InterPro" id="IPR005119">
    <property type="entry name" value="LysR_subst-bd"/>
</dbReference>
<dbReference type="InterPro" id="IPR037406">
    <property type="entry name" value="MetR_PBP2"/>
</dbReference>
<dbReference type="InterPro" id="IPR000847">
    <property type="entry name" value="Tscrpt_reg_HTH_LysR"/>
</dbReference>
<dbReference type="InterPro" id="IPR036388">
    <property type="entry name" value="WH-like_DNA-bd_sf"/>
</dbReference>
<dbReference type="InterPro" id="IPR036390">
    <property type="entry name" value="WH_DNA-bd_sf"/>
</dbReference>
<dbReference type="NCBIfam" id="NF011950">
    <property type="entry name" value="PRK15421.1"/>
    <property type="match status" value="1"/>
</dbReference>
<dbReference type="PANTHER" id="PTHR30126">
    <property type="entry name" value="HTH-TYPE TRANSCRIPTIONAL REGULATOR"/>
    <property type="match status" value="1"/>
</dbReference>
<dbReference type="PANTHER" id="PTHR30126:SF25">
    <property type="entry name" value="HTH-TYPE TRANSCRIPTIONAL REGULATOR METR"/>
    <property type="match status" value="1"/>
</dbReference>
<dbReference type="Pfam" id="PF00126">
    <property type="entry name" value="HTH_1"/>
    <property type="match status" value="1"/>
</dbReference>
<dbReference type="Pfam" id="PF03466">
    <property type="entry name" value="LysR_substrate"/>
    <property type="match status" value="1"/>
</dbReference>
<dbReference type="PRINTS" id="PR00039">
    <property type="entry name" value="HTHLYSR"/>
</dbReference>
<dbReference type="SUPFAM" id="SSF53850">
    <property type="entry name" value="Periplasmic binding protein-like II"/>
    <property type="match status" value="1"/>
</dbReference>
<dbReference type="SUPFAM" id="SSF46785">
    <property type="entry name" value="Winged helix' DNA-binding domain"/>
    <property type="match status" value="1"/>
</dbReference>
<dbReference type="PROSITE" id="PS50931">
    <property type="entry name" value="HTH_LYSR"/>
    <property type="match status" value="1"/>
</dbReference>
<reference key="1">
    <citation type="journal article" date="1987" name="J. Bacteriol.">
        <title>Nucleotide sequence of the Salmonella typhimurium metR gene and the metR-metE control region.</title>
        <authorList>
            <person name="Plamann L.S."/>
            <person name="Stauffer G.V."/>
        </authorList>
    </citation>
    <scope>NUCLEOTIDE SEQUENCE [GENOMIC DNA]</scope>
</reference>
<reference key="2">
    <citation type="submission" date="1997-12" db="EMBL/GenBank/DDBJ databases">
        <authorList>
            <person name="Urbanowski M."/>
        </authorList>
    </citation>
    <scope>SEQUENCE REVISION</scope>
</reference>
<reference key="3">
    <citation type="journal article" date="2001" name="Nature">
        <title>Complete genome sequence of Salmonella enterica serovar Typhimurium LT2.</title>
        <authorList>
            <person name="McClelland M."/>
            <person name="Sanderson K.E."/>
            <person name="Spieth J."/>
            <person name="Clifton S.W."/>
            <person name="Latreille P."/>
            <person name="Courtney L."/>
            <person name="Porwollik S."/>
            <person name="Ali J."/>
            <person name="Dante M."/>
            <person name="Du F."/>
            <person name="Hou S."/>
            <person name="Layman D."/>
            <person name="Leonard S."/>
            <person name="Nguyen C."/>
            <person name="Scott K."/>
            <person name="Holmes A."/>
            <person name="Grewal N."/>
            <person name="Mulvaney E."/>
            <person name="Ryan E."/>
            <person name="Sun H."/>
            <person name="Florea L."/>
            <person name="Miller W."/>
            <person name="Stoneking T."/>
            <person name="Nhan M."/>
            <person name="Waterston R."/>
            <person name="Wilson R.K."/>
        </authorList>
    </citation>
    <scope>NUCLEOTIDE SEQUENCE [LARGE SCALE GENOMIC DNA]</scope>
    <source>
        <strain>LT2 / SGSC1412 / ATCC 700720</strain>
    </source>
</reference>
<keyword id="KW-0010">Activator</keyword>
<keyword id="KW-0028">Amino-acid biosynthesis</keyword>
<keyword id="KW-0963">Cytoplasm</keyword>
<keyword id="KW-0238">DNA-binding</keyword>
<keyword id="KW-0486">Methionine biosynthesis</keyword>
<keyword id="KW-1185">Reference proteome</keyword>
<keyword id="KW-0678">Repressor</keyword>
<keyword id="KW-0804">Transcription</keyword>
<keyword id="KW-0805">Transcription regulation</keyword>
<proteinExistence type="inferred from homology"/>
<gene>
    <name type="primary">metR</name>
    <name type="ordered locus">STM3964</name>
    <name type="ORF">STMD1.26</name>
</gene>
<feature type="chain" id="PRO_0000105676" description="HTH-type transcriptional regulator MetR">
    <location>
        <begin position="1"/>
        <end position="317"/>
    </location>
</feature>
<feature type="domain" description="HTH lysR-type" evidence="1">
    <location>
        <begin position="1"/>
        <end position="59"/>
    </location>
</feature>
<feature type="DNA-binding region" description="H-T-H motif" evidence="1">
    <location>
        <begin position="19"/>
        <end position="38"/>
    </location>
</feature>
<feature type="sequence conflict" description="In Ref. 1; AAB88753." evidence="2" ref="1">
    <original>G</original>
    <variation>E</variation>
    <location>
        <position position="152"/>
    </location>
</feature>
<comment type="function">
    <text>Control of the last step in methionine biosynthesis; MetR is a positive activator of the metA, metE and metH genes. It is also a negative regulator of its own expression.</text>
</comment>
<comment type="subcellular location">
    <subcellularLocation>
        <location>Cytoplasm</location>
    </subcellularLocation>
</comment>
<comment type="similarity">
    <text evidence="2">Belongs to the LysR transcriptional regulatory family.</text>
</comment>
<sequence>MIEIKHLKTLQALRNSGSLAAAAAVLHQTQSALSHQFSDLEQRLGFRLFVRKSQPLRFTPQGEVLLQLANQVLPQISRALQACNEPQQTRLRIAIECHSCIQWLTPALENFRASWPQVEMDFTSGVTFDPQPALQQGELDLVMTSDILPRSGLHYSPMFDFEVRLVLAPDHPLASKTQITPEDLASETLLIYPVQRSRLDVWRHFLQPAGISPLLKSVDNTLLLIQMVAARMGIAALPHWVVESVERQGLVVTKTLGDGLWSRLYAAVRDGDQRQAVTEAFIRSTRDHACDHLPFVRSAERPIFDAPTAKPGSQPRL</sequence>
<name>METR_SALTY</name>
<organism>
    <name type="scientific">Salmonella typhimurium (strain LT2 / SGSC1412 / ATCC 700720)</name>
    <dbReference type="NCBI Taxonomy" id="99287"/>
    <lineage>
        <taxon>Bacteria</taxon>
        <taxon>Pseudomonadati</taxon>
        <taxon>Pseudomonadota</taxon>
        <taxon>Gammaproteobacteria</taxon>
        <taxon>Enterobacterales</taxon>
        <taxon>Enterobacteriaceae</taxon>
        <taxon>Salmonella</taxon>
    </lineage>
</organism>
<accession>P0A2Q4</accession>
<accession>P05984</accession>
<accession>Q9L6N2</accession>
<protein>
    <recommendedName>
        <fullName>HTH-type transcriptional regulator MetR</fullName>
    </recommendedName>
</protein>